<protein>
    <recommendedName>
        <fullName evidence="1">HTH-type transcriptional repressor FabR</fullName>
    </recommendedName>
</protein>
<proteinExistence type="inferred from homology"/>
<sequence>MGVRAQQKERTRRSLIEAAFSQLSAERSFASLSLREVSREAGIAPTSFYRHFRDVDELGLTMVDESGLMLRQLMRQARQRIAKGGSVIRTSVSTFMEFIGNNPNAFRLLLRERSGTSAAFRAAVAREIQHFIAELADYLELENHMPRSFTEAQAEAMVTIVFSAGAEVLDVDIEQRRQLEERLVLQLRMISKGAYYWYRREQEKLAASRVE</sequence>
<keyword id="KW-0963">Cytoplasm</keyword>
<keyword id="KW-0238">DNA-binding</keyword>
<keyword id="KW-0275">Fatty acid biosynthesis</keyword>
<keyword id="KW-0276">Fatty acid metabolism</keyword>
<keyword id="KW-0444">Lipid biosynthesis</keyword>
<keyword id="KW-0443">Lipid metabolism</keyword>
<keyword id="KW-0678">Repressor</keyword>
<keyword id="KW-0804">Transcription</keyword>
<keyword id="KW-0805">Transcription regulation</keyword>
<comment type="function">
    <text evidence="1">Represses the transcription of fabB, involved in unsaturated fatty acid (UFA) biosynthesis. By controlling UFA production, FabR directly influences the physical properties of the membrane bilayer.</text>
</comment>
<comment type="subunit">
    <text evidence="1">Homodimer.</text>
</comment>
<comment type="subcellular location">
    <subcellularLocation>
        <location evidence="1">Cytoplasm</location>
    </subcellularLocation>
</comment>
<name>FABR_YERP3</name>
<feature type="chain" id="PRO_1000065872" description="HTH-type transcriptional repressor FabR">
    <location>
        <begin position="1"/>
        <end position="211"/>
    </location>
</feature>
<feature type="domain" description="HTH tetR-type" evidence="1">
    <location>
        <begin position="10"/>
        <end position="70"/>
    </location>
</feature>
<feature type="DNA-binding region" description="H-T-H motif" evidence="1">
    <location>
        <begin position="33"/>
        <end position="52"/>
    </location>
</feature>
<organism>
    <name type="scientific">Yersinia pseudotuberculosis serotype O:1b (strain IP 31758)</name>
    <dbReference type="NCBI Taxonomy" id="349747"/>
    <lineage>
        <taxon>Bacteria</taxon>
        <taxon>Pseudomonadati</taxon>
        <taxon>Pseudomonadota</taxon>
        <taxon>Gammaproteobacteria</taxon>
        <taxon>Enterobacterales</taxon>
        <taxon>Yersiniaceae</taxon>
        <taxon>Yersinia</taxon>
    </lineage>
</organism>
<dbReference type="EMBL" id="CP000720">
    <property type="protein sequence ID" value="ABS46571.1"/>
    <property type="molecule type" value="Genomic_DNA"/>
</dbReference>
<dbReference type="RefSeq" id="WP_002209476.1">
    <property type="nucleotide sequence ID" value="NC_009708.1"/>
</dbReference>
<dbReference type="SMR" id="A7FD11"/>
<dbReference type="GeneID" id="96663601"/>
<dbReference type="KEGG" id="ypi:YpsIP31758_0139"/>
<dbReference type="HOGENOM" id="CLU_081861_0_0_6"/>
<dbReference type="Proteomes" id="UP000002412">
    <property type="component" value="Chromosome"/>
</dbReference>
<dbReference type="GO" id="GO:0005737">
    <property type="term" value="C:cytoplasm"/>
    <property type="evidence" value="ECO:0007669"/>
    <property type="project" value="UniProtKB-SubCell"/>
</dbReference>
<dbReference type="GO" id="GO:0003677">
    <property type="term" value="F:DNA binding"/>
    <property type="evidence" value="ECO:0007669"/>
    <property type="project" value="UniProtKB-KW"/>
</dbReference>
<dbReference type="GO" id="GO:0003700">
    <property type="term" value="F:DNA-binding transcription factor activity"/>
    <property type="evidence" value="ECO:0007669"/>
    <property type="project" value="UniProtKB-UniRule"/>
</dbReference>
<dbReference type="GO" id="GO:0006633">
    <property type="term" value="P:fatty acid biosynthetic process"/>
    <property type="evidence" value="ECO:0007669"/>
    <property type="project" value="UniProtKB-UniRule"/>
</dbReference>
<dbReference type="GO" id="GO:0045717">
    <property type="term" value="P:negative regulation of fatty acid biosynthetic process"/>
    <property type="evidence" value="ECO:0007669"/>
    <property type="project" value="UniProtKB-UniRule"/>
</dbReference>
<dbReference type="FunFam" id="1.10.10.60:FF:000034">
    <property type="entry name" value="HTH-type transcriptional repressor FabR"/>
    <property type="match status" value="1"/>
</dbReference>
<dbReference type="FunFam" id="1.10.357.10:FF:000001">
    <property type="entry name" value="HTH-type transcriptional repressor FabR"/>
    <property type="match status" value="1"/>
</dbReference>
<dbReference type="Gene3D" id="1.10.10.60">
    <property type="entry name" value="Homeodomain-like"/>
    <property type="match status" value="1"/>
</dbReference>
<dbReference type="Gene3D" id="1.10.357.10">
    <property type="entry name" value="Tetracycline Repressor, domain 2"/>
    <property type="match status" value="1"/>
</dbReference>
<dbReference type="HAMAP" id="MF_01190">
    <property type="entry name" value="HTH_type_FabR"/>
    <property type="match status" value="1"/>
</dbReference>
<dbReference type="InterPro" id="IPR054129">
    <property type="entry name" value="DesT_TetR_C"/>
</dbReference>
<dbReference type="InterPro" id="IPR009057">
    <property type="entry name" value="Homeodomain-like_sf"/>
</dbReference>
<dbReference type="InterPro" id="IPR001647">
    <property type="entry name" value="HTH_TetR"/>
</dbReference>
<dbReference type="InterPro" id="IPR050692">
    <property type="entry name" value="HTH_transcr_repressor_FabR"/>
</dbReference>
<dbReference type="InterPro" id="IPR023764">
    <property type="entry name" value="Tscrpt_reg_HTH_FabR"/>
</dbReference>
<dbReference type="NCBIfam" id="NF008402">
    <property type="entry name" value="PRK11202.1"/>
    <property type="match status" value="1"/>
</dbReference>
<dbReference type="PANTHER" id="PTHR47752">
    <property type="entry name" value="HTH-TYPE TRANSCRIPTIONAL REPRESSOR FABR"/>
    <property type="match status" value="1"/>
</dbReference>
<dbReference type="PANTHER" id="PTHR47752:SF1">
    <property type="entry name" value="HTH-TYPE TRANSCRIPTIONAL REPRESSOR FABR"/>
    <property type="match status" value="1"/>
</dbReference>
<dbReference type="Pfam" id="PF21943">
    <property type="entry name" value="TetR_C_46"/>
    <property type="match status" value="1"/>
</dbReference>
<dbReference type="Pfam" id="PF00440">
    <property type="entry name" value="TetR_N"/>
    <property type="match status" value="1"/>
</dbReference>
<dbReference type="SUPFAM" id="SSF46689">
    <property type="entry name" value="Homeodomain-like"/>
    <property type="match status" value="1"/>
</dbReference>
<dbReference type="PROSITE" id="PS50977">
    <property type="entry name" value="HTH_TETR_2"/>
    <property type="match status" value="1"/>
</dbReference>
<evidence type="ECO:0000255" key="1">
    <source>
        <dbReference type="HAMAP-Rule" id="MF_01190"/>
    </source>
</evidence>
<accession>A7FD11</accession>
<gene>
    <name evidence="1" type="primary">fabR</name>
    <name type="ordered locus">YpsIP31758_0139</name>
</gene>
<reference key="1">
    <citation type="journal article" date="2007" name="PLoS Genet.">
        <title>The complete genome sequence of Yersinia pseudotuberculosis IP31758, the causative agent of Far East scarlet-like fever.</title>
        <authorList>
            <person name="Eppinger M."/>
            <person name="Rosovitz M.J."/>
            <person name="Fricke W.F."/>
            <person name="Rasko D.A."/>
            <person name="Kokorina G."/>
            <person name="Fayolle C."/>
            <person name="Lindler L.E."/>
            <person name="Carniel E."/>
            <person name="Ravel J."/>
        </authorList>
    </citation>
    <scope>NUCLEOTIDE SEQUENCE [LARGE SCALE GENOMIC DNA]</scope>
    <source>
        <strain>IP 31758</strain>
    </source>
</reference>